<dbReference type="EMBL" id="X06414">
    <property type="protein sequence ID" value="CAA29723.1"/>
    <property type="molecule type" value="Genomic_DNA"/>
</dbReference>
<dbReference type="EMBL" id="CP000123">
    <property type="protein sequence ID" value="ABC01495.1"/>
    <property type="molecule type" value="Genomic_DNA"/>
</dbReference>
<dbReference type="PIR" id="S02850">
    <property type="entry name" value="BWYMSY"/>
</dbReference>
<dbReference type="RefSeq" id="WP_011387532.1">
    <property type="nucleotide sequence ID" value="NC_007633.1"/>
</dbReference>
<dbReference type="SMR" id="P10250"/>
<dbReference type="TCDB" id="3.A.5.3.1">
    <property type="family name" value="the general secretory pathway (sec) family"/>
</dbReference>
<dbReference type="GeneID" id="23778369"/>
<dbReference type="KEGG" id="mcp:MCAP_0677"/>
<dbReference type="HOGENOM" id="CLU_030313_0_1_14"/>
<dbReference type="PhylomeDB" id="P10250"/>
<dbReference type="Proteomes" id="UP000001928">
    <property type="component" value="Chromosome"/>
</dbReference>
<dbReference type="GO" id="GO:0005886">
    <property type="term" value="C:plasma membrane"/>
    <property type="evidence" value="ECO:0007669"/>
    <property type="project" value="UniProtKB-SubCell"/>
</dbReference>
<dbReference type="GO" id="GO:0065002">
    <property type="term" value="P:intracellular protein transmembrane transport"/>
    <property type="evidence" value="ECO:0007669"/>
    <property type="project" value="UniProtKB-UniRule"/>
</dbReference>
<dbReference type="GO" id="GO:0006605">
    <property type="term" value="P:protein targeting"/>
    <property type="evidence" value="ECO:0007669"/>
    <property type="project" value="UniProtKB-UniRule"/>
</dbReference>
<dbReference type="GO" id="GO:0043952">
    <property type="term" value="P:protein transport by the Sec complex"/>
    <property type="evidence" value="ECO:0007669"/>
    <property type="project" value="UniProtKB-UniRule"/>
</dbReference>
<dbReference type="FunFam" id="1.10.3370.10:FF:000001">
    <property type="entry name" value="Preprotein translocase subunit SecY"/>
    <property type="match status" value="1"/>
</dbReference>
<dbReference type="Gene3D" id="1.10.3370.10">
    <property type="entry name" value="SecY subunit domain"/>
    <property type="match status" value="1"/>
</dbReference>
<dbReference type="HAMAP" id="MF_01465">
    <property type="entry name" value="SecY"/>
    <property type="match status" value="1"/>
</dbReference>
<dbReference type="InterPro" id="IPR026593">
    <property type="entry name" value="SecY"/>
</dbReference>
<dbReference type="InterPro" id="IPR002208">
    <property type="entry name" value="SecY/SEC61-alpha"/>
</dbReference>
<dbReference type="InterPro" id="IPR030659">
    <property type="entry name" value="SecY_CS"/>
</dbReference>
<dbReference type="InterPro" id="IPR023201">
    <property type="entry name" value="SecY_dom_sf"/>
</dbReference>
<dbReference type="NCBIfam" id="TIGR00967">
    <property type="entry name" value="3a0501s007"/>
    <property type="match status" value="1"/>
</dbReference>
<dbReference type="PANTHER" id="PTHR10906">
    <property type="entry name" value="SECY/SEC61-ALPHA FAMILY MEMBER"/>
    <property type="match status" value="1"/>
</dbReference>
<dbReference type="Pfam" id="PF00344">
    <property type="entry name" value="SecY"/>
    <property type="match status" value="1"/>
</dbReference>
<dbReference type="PIRSF" id="PIRSF004557">
    <property type="entry name" value="SecY"/>
    <property type="match status" value="1"/>
</dbReference>
<dbReference type="PRINTS" id="PR00303">
    <property type="entry name" value="SECYTRNLCASE"/>
</dbReference>
<dbReference type="SUPFAM" id="SSF103491">
    <property type="entry name" value="Preprotein translocase SecY subunit"/>
    <property type="match status" value="1"/>
</dbReference>
<dbReference type="PROSITE" id="PS00755">
    <property type="entry name" value="SECY_1"/>
    <property type="match status" value="1"/>
</dbReference>
<dbReference type="PROSITE" id="PS00756">
    <property type="entry name" value="SECY_2"/>
    <property type="match status" value="1"/>
</dbReference>
<proteinExistence type="inferred from homology"/>
<organism>
    <name type="scientific">Mycoplasma capricolum subsp. capricolum (strain California kid / ATCC 27343 / NCTC 10154)</name>
    <dbReference type="NCBI Taxonomy" id="340047"/>
    <lineage>
        <taxon>Bacteria</taxon>
        <taxon>Bacillati</taxon>
        <taxon>Mycoplasmatota</taxon>
        <taxon>Mollicutes</taxon>
        <taxon>Mycoplasmataceae</taxon>
        <taxon>Mycoplasma</taxon>
    </lineage>
</organism>
<feature type="chain" id="PRO_0000131733" description="Protein translocase subunit SecY">
    <location>
        <begin position="1"/>
        <end position="482"/>
    </location>
</feature>
<feature type="transmembrane region" description="Helical" evidence="1">
    <location>
        <begin position="41"/>
        <end position="61"/>
    </location>
</feature>
<feature type="transmembrane region" description="Helical" evidence="1">
    <location>
        <begin position="92"/>
        <end position="112"/>
    </location>
</feature>
<feature type="transmembrane region" description="Helical" evidence="1">
    <location>
        <begin position="137"/>
        <end position="157"/>
    </location>
</feature>
<feature type="transmembrane region" description="Helical" evidence="1">
    <location>
        <begin position="177"/>
        <end position="197"/>
    </location>
</feature>
<feature type="transmembrane region" description="Helical" evidence="1">
    <location>
        <begin position="201"/>
        <end position="221"/>
    </location>
</feature>
<feature type="transmembrane region" description="Helical" evidence="1">
    <location>
        <begin position="243"/>
        <end position="263"/>
    </location>
</feature>
<feature type="transmembrane region" description="Helical" evidence="1">
    <location>
        <begin position="303"/>
        <end position="323"/>
    </location>
</feature>
<feature type="transmembrane region" description="Helical" evidence="1">
    <location>
        <begin position="342"/>
        <end position="362"/>
    </location>
</feature>
<feature type="transmembrane region" description="Helical" evidence="1">
    <location>
        <begin position="405"/>
        <end position="425"/>
    </location>
</feature>
<feature type="transmembrane region" description="Helical" evidence="1">
    <location>
        <begin position="426"/>
        <end position="446"/>
    </location>
</feature>
<feature type="region of interest" description="Disordered" evidence="2">
    <location>
        <begin position="1"/>
        <end position="22"/>
    </location>
</feature>
<feature type="sequence conflict" description="In Ref. 1; CAA29723." evidence="3" ref="1">
    <original>A</original>
    <variation>G</variation>
    <location>
        <position position="325"/>
    </location>
</feature>
<evidence type="ECO:0000255" key="1">
    <source>
        <dbReference type="HAMAP-Rule" id="MF_01465"/>
    </source>
</evidence>
<evidence type="ECO:0000256" key="2">
    <source>
        <dbReference type="SAM" id="MobiDB-lite"/>
    </source>
</evidence>
<evidence type="ECO:0000305" key="3"/>
<keyword id="KW-1003">Cell membrane</keyword>
<keyword id="KW-0472">Membrane</keyword>
<keyword id="KW-0653">Protein transport</keyword>
<keyword id="KW-0811">Translocation</keyword>
<keyword id="KW-0812">Transmembrane</keyword>
<keyword id="KW-1133">Transmembrane helix</keyword>
<keyword id="KW-0813">Transport</keyword>
<protein>
    <recommendedName>
        <fullName evidence="1">Protein translocase subunit SecY</fullName>
    </recommendedName>
</protein>
<comment type="function">
    <text evidence="1">The central subunit of the protein translocation channel SecYEG. Consists of two halves formed by TMs 1-5 and 6-10. These two domains form a lateral gate at the front which open onto the bilayer between TMs 2 and 7, and are clamped together by SecE at the back. The channel is closed by both a pore ring composed of hydrophobic SecY resides and a short helix (helix 2A) on the extracellular side of the membrane which forms a plug. The plug probably moves laterally to allow the channel to open. The ring and the pore may move independently.</text>
</comment>
<comment type="subunit">
    <text evidence="1">Component of the Sec protein translocase complex. Heterotrimer consisting of SecY, SecE and SecG subunits. The heterotrimers can form oligomers, although 1 heterotrimer is thought to be able to translocate proteins. Interacts with the ribosome. Interacts with SecDF, and other proteins may be involved. Interacts with SecA.</text>
</comment>
<comment type="subcellular location">
    <subcellularLocation>
        <location evidence="1">Cell membrane</location>
        <topology evidence="1">Multi-pass membrane protein</topology>
    </subcellularLocation>
</comment>
<comment type="similarity">
    <text evidence="1">Belongs to the SecY/SEC61-alpha family.</text>
</comment>
<reference key="1">
    <citation type="journal article" date="1987" name="Mol. Gen. Genet.">
        <title>The ribosomal protein gene cluster of Mycoplasma capricolum.</title>
        <authorList>
            <person name="Ohkubo S."/>
            <person name="Muto A."/>
            <person name="Kawauchi Y."/>
            <person name="Yamao F."/>
            <person name="Osawa S."/>
        </authorList>
    </citation>
    <scope>NUCLEOTIDE SEQUENCE [GENOMIC DNA]</scope>
</reference>
<reference key="2">
    <citation type="submission" date="2005-09" db="EMBL/GenBank/DDBJ databases">
        <authorList>
            <person name="Glass J.I."/>
            <person name="Lartigue C."/>
            <person name="Pfannkoch C."/>
            <person name="Baden-Tillson H."/>
            <person name="Smith H.O."/>
            <person name="Venter J.C."/>
            <person name="Roske K."/>
            <person name="Wise K.S."/>
            <person name="Calcutt M.J."/>
            <person name="Nelson W.C."/>
            <person name="Nierman W.C."/>
        </authorList>
    </citation>
    <scope>NUCLEOTIDE SEQUENCE [LARGE SCALE GENOMIC DNA]</scope>
    <source>
        <strain>California kid / ATCC 27343 / NCTC 10154</strain>
    </source>
</reference>
<gene>
    <name evidence="1" type="primary">secY</name>
    <name type="ordered locus">MCAP_0677</name>
</gene>
<sequence>MVIKKPANKVDKKSTFKSSNKKKNPFKSSFLTKNKDLIYRILFTLLALIIIRLGVYITVPGVTLDKRFATDSSRIQFFQLLSTLGGGSIGRFSILALGVSPYITASIIVQLLSTDVIPVLTRWSKSGERGRKKLDKLTKIIMIPFALMQAEATIFTLSSQGLIIPGWDNTNAIANSAFYYILIPLVMLGGSFFMLWIADQITIKGIGNGISIVIFIGIIISMPSNLKSTFEYWVSNSGEEANIFFSGLLNFMIYISVFLLVILSVVIMNEAERKIPIQQTGSGLTDSSEHTPYLPLKLNNAGVIPVIFASAIISTPITISQIIEAVNPDSGFVIFTRDYLSFNTWWGISIFGILIVLFTFLYSQVQINPEKIAENFQKSGTFIPGIKPGKDTTKYLTGIINRLSVVGSVFLAIIALLPYVISKLTQLPSNLAIGGTGLIICISVAIQTVQQLKGRIIQQNFIEKKKEKFTNNINKNKTSHIW</sequence>
<accession>P10250</accession>
<accession>Q2SRH2</accession>
<name>SECY_MYCCT</name>